<evidence type="ECO:0000269" key="1">
    <source>
    </source>
</evidence>
<evidence type="ECO:0000269" key="2">
    <source>
    </source>
</evidence>
<evidence type="ECO:0000269" key="3">
    <source>
    </source>
</evidence>
<evidence type="ECO:0000269" key="4">
    <source>
    </source>
</evidence>
<evidence type="ECO:0000269" key="5">
    <source>
    </source>
</evidence>
<evidence type="ECO:0000269" key="6">
    <source>
    </source>
</evidence>
<evidence type="ECO:0000305" key="7"/>
<accession>Q9AWA5</accession>
<accession>O82061</accession>
<comment type="function">
    <text evidence="2 4 6">Mediates the incorporation of phosphate into starch-like alpha-glucan, mostly at the C-6 position of glucose units. Acts as an overall regulator of starch mobilization. Required for starch degradation, suggesting that the phosphate content of starch regulates its degradability. More active on alpha-1,6 branched amylopectin.</text>
</comment>
<comment type="catalytic activity">
    <reaction evidence="3">
        <text>[(1-&gt;4)-alpha-D-glucosyl](n) + n ATP + n H2O = [(1-&gt;4)-6-phospho-alpha-D-glucosyl](n) + n AMP + n phosphate + 2n H(+)</text>
        <dbReference type="Rhea" id="RHEA:11668"/>
        <dbReference type="Rhea" id="RHEA-COMP:9584"/>
        <dbReference type="Rhea" id="RHEA-COMP:12983"/>
        <dbReference type="ChEBI" id="CHEBI:15377"/>
        <dbReference type="ChEBI" id="CHEBI:15378"/>
        <dbReference type="ChEBI" id="CHEBI:15444"/>
        <dbReference type="ChEBI" id="CHEBI:30616"/>
        <dbReference type="ChEBI" id="CHEBI:43474"/>
        <dbReference type="ChEBI" id="CHEBI:134068"/>
        <dbReference type="ChEBI" id="CHEBI:456215"/>
        <dbReference type="EC" id="2.7.9.4"/>
    </reaction>
</comment>
<comment type="catalytic activity">
    <reaction evidence="3">
        <text>ATP + protein L-histidine = ADP + protein N-phospho-L-histidine.</text>
        <dbReference type="EC" id="2.7.13.3"/>
    </reaction>
</comment>
<comment type="cofactor">
    <cofactor evidence="3">
        <name>Mg(2+)</name>
        <dbReference type="ChEBI" id="CHEBI:18420"/>
    </cofactor>
</comment>
<comment type="biophysicochemical properties">
    <kinetics>
        <KM evidence="3 4">0.23 uM for ATP</KM>
        <KM evidence="3 4">1.7 uM for amylopectin</KM>
    </kinetics>
    <phDependence>
        <text evidence="3 4">Optimum pH is 7.</text>
    </phDependence>
    <temperatureDependence>
        <text evidence="3 4">Optimum temperature is 35 degrees Celsius.</text>
    </temperatureDependence>
</comment>
<comment type="subunit">
    <text evidence="4">Homodimer.</text>
</comment>
<comment type="subcellular location">
    <subcellularLocation>
        <location evidence="1 6">Plastid</location>
        <location evidence="1 6">Chloroplast</location>
    </subcellularLocation>
    <text>Starch granules. Binds to starch granules isolated from either illuminated or darkened leaves. However, binding to darkened leaves is more effective, suggesting that depending upon the metabolic state of the cells, the starch granule surface changes and thereby affects its binding.</text>
</comment>
<comment type="tissue specificity">
    <text evidence="6">Expressed in leaves.</text>
</comment>
<comment type="domain">
    <text>The N-terminal domain contains the alpha-glucan binding site, the central domain the pyrophosphate/phosphate carrier histidine, and the C-terminal domain the ATP binding site.</text>
</comment>
<comment type="miscellaneous">
    <text>The reaction takes place in three steps, mediated by a phosphocarrier histidine residue located on the surface of the central domain. The two first partial reactions are catalyzed at an active site located on the C-terminal domain, and the third partial reaction is catalyzed at an active site located on the N-terminal domain. For catalytic turnover, the central domain swivels from the concave surface of the C-terminal domain to that of the N-terminal domain.</text>
</comment>
<comment type="similarity">
    <text evidence="7">Belongs to the PEP-utilizing enzyme family.</text>
</comment>
<name>GWD1_SOLTU</name>
<gene>
    <name type="primary">R1</name>
</gene>
<reference key="1">
    <citation type="journal article" date="1998" name="Nat. Biotechnol.">
        <title>Inhibition of a starch-granule-bound protein leads to modified starch and repression of cold sweetening.</title>
        <authorList>
            <person name="Lorberth R."/>
            <person name="Ritte G."/>
            <person name="Willmitzer L."/>
            <person name="Kossmann J."/>
        </authorList>
    </citation>
    <scope>NUCLEOTIDE SEQUENCE [MRNA]</scope>
    <scope>PROTEIN SEQUENCE OF 78-91</scope>
    <scope>FUNCTION</scope>
    <scope>SUBCELLULAR LOCATION</scope>
    <scope>TISSUE SPECIFICITY</scope>
    <source>
        <strain>cv. Desiree</strain>
    </source>
</reference>
<reference key="2">
    <citation type="journal article" date="2002" name="Carbohydr. Res.">
        <title>Production of highly phosphorylated glycopolymers by expression of R1 in Escherichia coli.</title>
        <authorList>
            <person name="Viksoe-Nielsen A."/>
            <person name="Chen P.-H.J."/>
            <person name="Larsson H."/>
            <person name="Blennow A."/>
            <person name="Moeller B.L."/>
        </authorList>
    </citation>
    <scope>NUCLEOTIDE SEQUENCE [MRNA]</scope>
    <scope>FUNCTION</scope>
    <source>
        <strain>cv. Prevalent</strain>
    </source>
</reference>
<reference key="3">
    <citation type="journal article" date="2005" name="Biochem. J.">
        <title>Functional domain organization of the potato alpha-glucan, water dikinase (GWD): evidence for separate site catalysis as revealed by limited proteolysis and deletion mutants.</title>
        <authorList>
            <person name="Mikkelsen R."/>
            <person name="Blennow A."/>
        </authorList>
    </citation>
    <scope>PROTEIN SEQUENCE OF 78-86; 394-405; 614-622; 797-805; 1121-1130 AND 1132-1140</scope>
    <scope>ACTIVE SITE HIS-1069</scope>
    <scope>ENZYME MECHANISM</scope>
</reference>
<reference key="4">
    <citation type="journal article" date="2000" name="Plant J.">
        <title>Reversible binding of the starch-related R1 protein to the surface of transitory starch granules.</title>
        <authorList>
            <person name="Ritte G."/>
            <person name="Lorberth R."/>
            <person name="Steup M."/>
        </authorList>
    </citation>
    <scope>SUBCELLULAR LOCATION</scope>
</reference>
<reference key="5">
    <citation type="journal article" date="2002" name="Proc. Natl. Acad. Sci. U.S.A.">
        <title>The starch-related R1 protein is an alpha-glucan, water dikinase.</title>
        <authorList>
            <person name="Ritte G."/>
            <person name="Lloyd J.R."/>
            <person name="Eckermann N."/>
            <person name="Rottmann A."/>
            <person name="Kossmann J."/>
            <person name="Steup M."/>
        </authorList>
    </citation>
    <scope>ENZYME ACTIVITY</scope>
    <scope>COFACTOR</scope>
    <scope>BIOPHYSICOCHEMICAL PROPERTIES</scope>
</reference>
<reference key="6">
    <citation type="journal article" date="2004" name="Biochem. J.">
        <title>Functional characterization of alpha-glucan, water dikinase, the starch phosphorylating enzyme.</title>
        <authorList>
            <person name="Mikkelsen R."/>
            <person name="Baunsgaard L."/>
            <person name="Blennow A."/>
        </authorList>
    </citation>
    <scope>FUNCTION</scope>
    <scope>SUBUNIT</scope>
    <scope>BIOPHYSICOCHEMICAL PROPERTIES</scope>
    <scope>ACTIVE SITE HIS-1069</scope>
    <scope>MUTAGENESIS OF HIS-1069</scope>
</reference>
<keyword id="KW-0067">ATP-binding</keyword>
<keyword id="KW-0119">Carbohydrate metabolism</keyword>
<keyword id="KW-0150">Chloroplast</keyword>
<keyword id="KW-0903">Direct protein sequencing</keyword>
<keyword id="KW-0418">Kinase</keyword>
<keyword id="KW-0460">Magnesium</keyword>
<keyword id="KW-0479">Metal-binding</keyword>
<keyword id="KW-0547">Nucleotide-binding</keyword>
<keyword id="KW-0934">Plastid</keyword>
<keyword id="KW-1185">Reference proteome</keyword>
<keyword id="KW-0808">Transferase</keyword>
<keyword id="KW-0809">Transit peptide</keyword>
<protein>
    <recommendedName>
        <fullName>Alpha-glucan water dikinase, chloroplastic</fullName>
        <ecNumber>2.7.13.3</ecNumber>
        <ecNumber>2.7.9.4</ecNumber>
    </recommendedName>
    <alternativeName>
        <fullName>Starch-related R1 protein</fullName>
    </alternativeName>
</protein>
<proteinExistence type="evidence at protein level"/>
<feature type="transit peptide" description="Chloroplast" evidence="5 6">
    <location>
        <begin position="1"/>
        <end position="77"/>
    </location>
</feature>
<feature type="chain" id="PRO_0000023567" description="Alpha-glucan water dikinase, chloroplastic">
    <location>
        <begin position="78"/>
        <end position="1464"/>
    </location>
</feature>
<feature type="active site" description="Tele-phosphohistidine intermediate" evidence="4 5">
    <location>
        <position position="1069"/>
    </location>
</feature>
<feature type="mutagenesis site" description="Loss of activity, no autophosphorylation." evidence="4">
    <original>H</original>
    <variation>A</variation>
    <location>
        <position position="1069"/>
    </location>
</feature>
<feature type="sequence conflict" description="In Ref. 2." evidence="7" ref="2">
    <original>E</original>
    <variation>G</variation>
    <location>
        <position position="66"/>
    </location>
</feature>
<feature type="sequence conflict" description="In Ref. 2." evidence="7" ref="2">
    <original>K</original>
    <variation>N</variation>
    <location>
        <position position="68"/>
    </location>
</feature>
<feature type="sequence conflict" description="In Ref. 2; AAK11735 and 3; AA sequence." evidence="7" ref="2 3">
    <original>E</original>
    <variation>Q</variation>
    <location>
        <position position="86"/>
    </location>
</feature>
<feature type="sequence conflict" description="In Ref. 2; AAK11735." evidence="7" ref="2">
    <original>G</original>
    <variation>E</variation>
    <location>
        <position position="94"/>
    </location>
</feature>
<feature type="sequence conflict" description="In Ref. 2; AAK11735." evidence="7" ref="2">
    <original>N</original>
    <variation>I</variation>
    <location>
        <position position="198"/>
    </location>
</feature>
<feature type="sequence conflict" description="In Ref. 2; AAK11735." evidence="7" ref="2">
    <original>RV</original>
    <variation>HI</variation>
    <location>
        <begin position="203"/>
        <end position="204"/>
    </location>
</feature>
<feature type="sequence conflict" description="In Ref. 2; AAK11735." evidence="7" ref="2">
    <original>P</original>
    <variation>T</variation>
    <location>
        <position position="240"/>
    </location>
</feature>
<feature type="sequence conflict" description="In Ref. 2; AAK11735." evidence="7" ref="2">
    <original>V</original>
    <variation>E</variation>
    <location>
        <position position="254"/>
    </location>
</feature>
<feature type="sequence conflict" description="In Ref. 2; AAK11735." evidence="7" ref="2">
    <original>D</original>
    <variation>N</variation>
    <location>
        <position position="292"/>
    </location>
</feature>
<feature type="sequence conflict" description="In Ref. 2; AAK11735." evidence="7" ref="2">
    <original>T</original>
    <variation>K</variation>
    <location>
        <position position="346"/>
    </location>
</feature>
<feature type="sequence conflict" description="In Ref. 2; AAK11735." evidence="7" ref="2">
    <original>K</original>
    <variation>E</variation>
    <location>
        <position position="353"/>
    </location>
</feature>
<feature type="sequence conflict" description="In Ref. 2; AAK11735." evidence="7" ref="2">
    <original>H</original>
    <variation>Q</variation>
    <location>
        <position position="379"/>
    </location>
</feature>
<feature type="sequence conflict" description="In Ref. 2; AAK11735." evidence="7" ref="2">
    <original>T</original>
    <variation>P</variation>
    <location>
        <position position="385"/>
    </location>
</feature>
<feature type="sequence conflict" description="In Ref. 2; AAK11735." evidence="7" ref="2">
    <original>P</original>
    <variation>A</variation>
    <location>
        <position position="400"/>
    </location>
</feature>
<feature type="sequence conflict" description="In Ref. 3; AA sequence." evidence="7" ref="3">
    <location>
        <position position="400"/>
    </location>
</feature>
<feature type="sequence conflict" description="In Ref. 2; AAK11735." evidence="7" ref="2">
    <original>A</original>
    <variation>S</variation>
    <location>
        <position position="438"/>
    </location>
</feature>
<feature type="sequence conflict" description="In Ref. 2; AAK11735." evidence="7" ref="2">
    <original>G</original>
    <variation>D</variation>
    <location>
        <position position="540"/>
    </location>
</feature>
<feature type="sequence conflict" description="In Ref. 2; AAK11735." evidence="7" ref="2">
    <original>L</original>
    <variation>S</variation>
    <location>
        <position position="547"/>
    </location>
</feature>
<feature type="sequence conflict" description="In Ref. 2; AAK11735." evidence="7" ref="2">
    <original>I</original>
    <variation>M</variation>
    <location>
        <position position="588"/>
    </location>
</feature>
<feature type="sequence conflict" description="In Ref. 2; AAK11735." evidence="7" ref="2">
    <original>N</original>
    <variation>K</variation>
    <location>
        <position position="681"/>
    </location>
</feature>
<feature type="sequence conflict" description="In Ref. 2; AAK11735." evidence="7" ref="2">
    <original>Q</original>
    <variation>E</variation>
    <location>
        <position position="690"/>
    </location>
</feature>
<feature type="sequence conflict" description="In Ref. 2; AAK11735." evidence="7" ref="2">
    <original>R</original>
    <variation>K</variation>
    <location>
        <position position="768"/>
    </location>
</feature>
<feature type="sequence conflict" description="In Ref. 2; AAK11735 and 3; AA sequence." evidence="7" ref="2 3">
    <original>A</original>
    <variation>V</variation>
    <location>
        <position position="1129"/>
    </location>
</feature>
<feature type="sequence conflict" description="In Ref. 2; AAK11735." evidence="7" ref="2">
    <original>M</original>
    <variation>T</variation>
    <location>
        <position position="1209"/>
    </location>
</feature>
<feature type="sequence conflict" description="In Ref. 2; AAK11735." evidence="7" ref="2">
    <original>G</original>
    <variation>V</variation>
    <location>
        <position position="1256"/>
    </location>
</feature>
<dbReference type="EC" id="2.7.13.3"/>
<dbReference type="EC" id="2.7.9.4"/>
<dbReference type="EMBL" id="Y09533">
    <property type="protein sequence ID" value="CAA70725.1"/>
    <property type="molecule type" value="mRNA"/>
</dbReference>
<dbReference type="EMBL" id="AY027522">
    <property type="protein sequence ID" value="AAK11735.1"/>
    <property type="molecule type" value="mRNA"/>
</dbReference>
<dbReference type="PIR" id="T07050">
    <property type="entry name" value="T07050"/>
</dbReference>
<dbReference type="SMR" id="Q9AWA5"/>
<dbReference type="FunCoup" id="Q9AWA5">
    <property type="interactions" value="892"/>
</dbReference>
<dbReference type="CAZy" id="CBM45">
    <property type="family name" value="Carbohydrate-Binding Module Family 45"/>
</dbReference>
<dbReference type="PaxDb" id="4113-PGSC0003DMT400019845"/>
<dbReference type="ProMEX" id="Q9AWA5"/>
<dbReference type="KEGG" id="ag:CAA70725"/>
<dbReference type="eggNOG" id="ENOG502QQ6R">
    <property type="taxonomic scope" value="Eukaryota"/>
</dbReference>
<dbReference type="InParanoid" id="Q9AWA5"/>
<dbReference type="BRENDA" id="2.7.9.4">
    <property type="organism ID" value="5757"/>
</dbReference>
<dbReference type="SABIO-RK" id="Q9AWA5"/>
<dbReference type="Proteomes" id="UP000011115">
    <property type="component" value="Unassembled WGS sequence"/>
</dbReference>
<dbReference type="ExpressionAtlas" id="Q9AWA5">
    <property type="expression patterns" value="baseline and differential"/>
</dbReference>
<dbReference type="GO" id="GO:0009507">
    <property type="term" value="C:chloroplast"/>
    <property type="evidence" value="ECO:0007669"/>
    <property type="project" value="UniProtKB-SubCell"/>
</dbReference>
<dbReference type="GO" id="GO:0050521">
    <property type="term" value="F:alpha-glucan, water dikinase activity"/>
    <property type="evidence" value="ECO:0007669"/>
    <property type="project" value="UniProtKB-EC"/>
</dbReference>
<dbReference type="GO" id="GO:0005524">
    <property type="term" value="F:ATP binding"/>
    <property type="evidence" value="ECO:0007669"/>
    <property type="project" value="UniProtKB-KW"/>
</dbReference>
<dbReference type="GO" id="GO:0046872">
    <property type="term" value="F:metal ion binding"/>
    <property type="evidence" value="ECO:0007669"/>
    <property type="project" value="UniProtKB-KW"/>
</dbReference>
<dbReference type="GO" id="GO:0004673">
    <property type="term" value="F:protein histidine kinase activity"/>
    <property type="evidence" value="ECO:0007669"/>
    <property type="project" value="UniProtKB-EC"/>
</dbReference>
<dbReference type="FunFam" id="3.30.1490.20:FF:000033">
    <property type="entry name" value="alpha-glucan water dikinase, chloroplastic isoform X2"/>
    <property type="match status" value="1"/>
</dbReference>
<dbReference type="Gene3D" id="3.30.1490.20">
    <property type="entry name" value="ATP-grasp fold, A domain"/>
    <property type="match status" value="1"/>
</dbReference>
<dbReference type="Gene3D" id="3.30.470.20">
    <property type="entry name" value="ATP-grasp fold, B domain"/>
    <property type="match status" value="1"/>
</dbReference>
<dbReference type="InterPro" id="IPR013815">
    <property type="entry name" value="ATP_grasp_subdomain_1"/>
</dbReference>
<dbReference type="InterPro" id="IPR055495">
    <property type="entry name" value="CWD_DUF7067"/>
</dbReference>
<dbReference type="InterPro" id="IPR056301">
    <property type="entry name" value="GWD-like_N_Ig"/>
</dbReference>
<dbReference type="InterPro" id="IPR054481">
    <property type="entry name" value="GWD1_pHisD"/>
</dbReference>
<dbReference type="InterPro" id="IPR002192">
    <property type="entry name" value="PPDK_AMP/ATP-bd"/>
</dbReference>
<dbReference type="PANTHER" id="PTHR46999:SF1">
    <property type="entry name" value="ALPHA-GLUCAN WATER DIKINASE 1, CHLOROPLASTIC"/>
    <property type="match status" value="1"/>
</dbReference>
<dbReference type="PANTHER" id="PTHR46999">
    <property type="entry name" value="ALPHA-GLUCAN WATER DIKINASE 1, CHLOROPLASTIC-RELATED"/>
    <property type="match status" value="1"/>
</dbReference>
<dbReference type="Pfam" id="PF23229">
    <property type="entry name" value="DUF7067"/>
    <property type="match status" value="2"/>
</dbReference>
<dbReference type="Pfam" id="PF22973">
    <property type="entry name" value="GWD1_pHisD"/>
    <property type="match status" value="1"/>
</dbReference>
<dbReference type="Pfam" id="PF23166">
    <property type="entry name" value="Ig_N_CWD1"/>
    <property type="match status" value="2"/>
</dbReference>
<dbReference type="Pfam" id="PF01326">
    <property type="entry name" value="PPDK_N"/>
    <property type="match status" value="1"/>
</dbReference>
<dbReference type="SUPFAM" id="SSF56059">
    <property type="entry name" value="Glutathione synthetase ATP-binding domain-like"/>
    <property type="match status" value="1"/>
</dbReference>
<organism>
    <name type="scientific">Solanum tuberosum</name>
    <name type="common">Potato</name>
    <dbReference type="NCBI Taxonomy" id="4113"/>
    <lineage>
        <taxon>Eukaryota</taxon>
        <taxon>Viridiplantae</taxon>
        <taxon>Streptophyta</taxon>
        <taxon>Embryophyta</taxon>
        <taxon>Tracheophyta</taxon>
        <taxon>Spermatophyta</taxon>
        <taxon>Magnoliopsida</taxon>
        <taxon>eudicotyledons</taxon>
        <taxon>Gunneridae</taxon>
        <taxon>Pentapetalae</taxon>
        <taxon>asterids</taxon>
        <taxon>lamiids</taxon>
        <taxon>Solanales</taxon>
        <taxon>Solanaceae</taxon>
        <taxon>Solanoideae</taxon>
        <taxon>Solaneae</taxon>
        <taxon>Solanum</taxon>
    </lineage>
</organism>
<sequence length="1464" mass="163237">MSNSLGNNLLYQGFLTSTVLEHKSRISPPCVGGNSLFQQQVISKSPLSTEFRGNRLKVQKKKIPMEKKRAFSSSPHAVLTTDTSSELAEKFSLGGNIELQVDVRPPTSGDVSFVDFQVTNGSDKLFLHWGAVKFGKETWSLPNDRPDGTKVYKNKALRTPFVKSGSNSILRLEIRDTAIEAIEFLIYDEAHDKWIKNNGGNFRVKLSRKEIRGPDVSVPEELVQIQSYLRWERKGKQNYPPEKEKEEYEAARTVLQEEIARGASIQDIRARLTKTNDKSQSKEEPLHVTKSDIPDDLAQAQAYIRWEKAGKPNYPPEKQIEELEEARRELQLELEKGITLDELRKTITKGEIKTKVEKHLKRSSFAVERIQRKKRDFGHLINKYTSSPAVQVQKVLEEPPALSKIKLYAKEKEEQIDDPILNKKIFKVDDGELLVLVAKSSGKTKVHLATDLNQPITLHWALSKSPGEWMVPPSSILPPGSIILDKAAETPFSASSSDGLTSKVQSLDIVIEDGNFVGMPFVLLSGEKWIKNQGSDFYVGFSAASKLALKAAGDGSGTAKSLLDKIADMESEAQKSFMHRFNIAADLIEDATSAGELGFAGILVWMRFMATRQLIWNKNYNVKPREISKAQDRLTDLLQNAFTSHPQYREILRMIMSTVGRGGEGDVGQRIRDEILVIQRNNDCKGGMMQEWHQKLHNNTSPDDVVICQALIDYIKSDFDLGVYWKTLNENGITKERLLSYDRAIHSEPNFRGDQKGGLLRDLGHYMRTLKAVHSGADLESAIANCMGYKTEGEGFMVGVQINPVSGLPSGFQDLLHFVLDHVEDKNVETLLERLLEAREELRPLLLKPNNRLKDLLFLDIALDSTVRTAVERGYEELNNANPEKIMYFISLVLENLALSVDDNEDLVYCLKGWNQALSMSNGGDNHWALFAKAVLDRTRLALASKAEWYHHLLQPSAEYLGSILGVDQWALNIFTEEIIRAGSAASLSSLLNRLDPVLRKTANLGSWQIISPVEAVGYVVVVDELLSVQNEIYEKPTILVAKSVKGEEEIPDGAVALITPDMPDVLSHVSVRARNGKVCFATCFDPNILADLQAKEGRILLLKPTPSDIIYSEVNEIELQSSSNLVEAETSATLRLVKKQFGGCYAISADEFTSEMVGAKSRNIAYLKGKVPSSVGIPTSVALPFGVFEKVLSDDINQGVAKELQILMKKLSEGDFSALGEIRTTVLDLSAPAQLVKELKEKMQGSGMPWPGDEGPKRWEQAWMAIKKVWASKWNERAYFSTRKVKLDHDYLCMAVLVQEIINADYAFVIHTTNPSSGDDSEIYAEVVRGLGETLVGAYPGRALSFICKKKDLNSPQVLGYPSKPIGLFIKRSIIFRSDSNGEDLEGYAGAGLYDSVPMDEEEKVVIDYSSDPLITDGNFRQTILSNIARAGHAIEELYGSPQDIEGVVRDGKIYVVQTRPQM</sequence>